<protein>
    <recommendedName>
        <fullName evidence="1">Type III pantothenate kinase</fullName>
        <ecNumber evidence="1">2.7.1.33</ecNumber>
    </recommendedName>
    <alternativeName>
        <fullName evidence="1">PanK-III</fullName>
    </alternativeName>
    <alternativeName>
        <fullName evidence="1">Pantothenic acid kinase</fullName>
    </alternativeName>
</protein>
<reference key="1">
    <citation type="journal article" date="1999" name="Nature">
        <title>Genomic sequence comparison of two unrelated isolates of the human gastric pathogen Helicobacter pylori.</title>
        <authorList>
            <person name="Alm R.A."/>
            <person name="Ling L.-S.L."/>
            <person name="Moir D.T."/>
            <person name="King B.L."/>
            <person name="Brown E.D."/>
            <person name="Doig P.C."/>
            <person name="Smith D.R."/>
            <person name="Noonan B."/>
            <person name="Guild B.C."/>
            <person name="deJonge B.L."/>
            <person name="Carmel G."/>
            <person name="Tummino P.J."/>
            <person name="Caruso A."/>
            <person name="Uria-Nickelsen M."/>
            <person name="Mills D.M."/>
            <person name="Ives C."/>
            <person name="Gibson R."/>
            <person name="Merberg D."/>
            <person name="Mills S.D."/>
            <person name="Jiang Q."/>
            <person name="Taylor D.E."/>
            <person name="Vovis G.F."/>
            <person name="Trust T.J."/>
        </authorList>
    </citation>
    <scope>NUCLEOTIDE SEQUENCE [LARGE SCALE GENOMIC DNA]</scope>
    <source>
        <strain>J99 / ATCC 700824</strain>
    </source>
</reference>
<organism>
    <name type="scientific">Helicobacter pylori (strain J99 / ATCC 700824)</name>
    <name type="common">Campylobacter pylori J99</name>
    <dbReference type="NCBI Taxonomy" id="85963"/>
    <lineage>
        <taxon>Bacteria</taxon>
        <taxon>Pseudomonadati</taxon>
        <taxon>Campylobacterota</taxon>
        <taxon>Epsilonproteobacteria</taxon>
        <taxon>Campylobacterales</taxon>
        <taxon>Helicobacteraceae</taxon>
        <taxon>Helicobacter</taxon>
    </lineage>
</organism>
<accession>Q9ZKY6</accession>
<sequence length="223" mass="24754">MPARQSFKDLKDLILCDIGNTRIHFAQNYQLFSSAKEDLKRLGIQKEIFYISVNEENEKALLNCYPNAKNIAGFFHLETDYIGLGIDRQMACLAVVNGVIVDAGSAITIDLVKEGKHLGGCILPGLAQYVHAYKKSAKILEQPFKALDSLEVLPKNTRDAVNYGMILSIISCIQHLAKDQKIYLCGGDAKYLSAFLPHSVCKERLVFDGMEIALKKAGILECK</sequence>
<dbReference type="EC" id="2.7.1.33" evidence="1"/>
<dbReference type="EMBL" id="AE001439">
    <property type="protein sequence ID" value="AAD06372.1"/>
    <property type="molecule type" value="Genomic_DNA"/>
</dbReference>
<dbReference type="PIR" id="G71887">
    <property type="entry name" value="G71887"/>
</dbReference>
<dbReference type="RefSeq" id="WP_001111534.1">
    <property type="nucleotide sequence ID" value="NC_000921.1"/>
</dbReference>
<dbReference type="SMR" id="Q9ZKY6"/>
<dbReference type="KEGG" id="hpj:jhp_0796"/>
<dbReference type="PATRIC" id="fig|85963.30.peg.176"/>
<dbReference type="eggNOG" id="COG1521">
    <property type="taxonomic scope" value="Bacteria"/>
</dbReference>
<dbReference type="UniPathway" id="UPA00241">
    <property type="reaction ID" value="UER00352"/>
</dbReference>
<dbReference type="Proteomes" id="UP000000804">
    <property type="component" value="Chromosome"/>
</dbReference>
<dbReference type="GO" id="GO:0005737">
    <property type="term" value="C:cytoplasm"/>
    <property type="evidence" value="ECO:0007669"/>
    <property type="project" value="UniProtKB-SubCell"/>
</dbReference>
<dbReference type="GO" id="GO:0005524">
    <property type="term" value="F:ATP binding"/>
    <property type="evidence" value="ECO:0007669"/>
    <property type="project" value="UniProtKB-UniRule"/>
</dbReference>
<dbReference type="GO" id="GO:0046872">
    <property type="term" value="F:metal ion binding"/>
    <property type="evidence" value="ECO:0007669"/>
    <property type="project" value="UniProtKB-KW"/>
</dbReference>
<dbReference type="GO" id="GO:0004594">
    <property type="term" value="F:pantothenate kinase activity"/>
    <property type="evidence" value="ECO:0007669"/>
    <property type="project" value="UniProtKB-UniRule"/>
</dbReference>
<dbReference type="GO" id="GO:0015937">
    <property type="term" value="P:coenzyme A biosynthetic process"/>
    <property type="evidence" value="ECO:0007669"/>
    <property type="project" value="UniProtKB-UniRule"/>
</dbReference>
<dbReference type="CDD" id="cd24015">
    <property type="entry name" value="ASKHA_NBD_PanK-III"/>
    <property type="match status" value="1"/>
</dbReference>
<dbReference type="Gene3D" id="3.30.420.40">
    <property type="match status" value="2"/>
</dbReference>
<dbReference type="HAMAP" id="MF_01274">
    <property type="entry name" value="Pantothen_kinase_3"/>
    <property type="match status" value="1"/>
</dbReference>
<dbReference type="InterPro" id="IPR043129">
    <property type="entry name" value="ATPase_NBD"/>
</dbReference>
<dbReference type="InterPro" id="IPR004619">
    <property type="entry name" value="Type_III_PanK"/>
</dbReference>
<dbReference type="NCBIfam" id="TIGR00671">
    <property type="entry name" value="baf"/>
    <property type="match status" value="1"/>
</dbReference>
<dbReference type="NCBIfam" id="NF009872">
    <property type="entry name" value="PRK13333.1"/>
    <property type="match status" value="1"/>
</dbReference>
<dbReference type="PANTHER" id="PTHR34265">
    <property type="entry name" value="TYPE III PANTOTHENATE KINASE"/>
    <property type="match status" value="1"/>
</dbReference>
<dbReference type="PANTHER" id="PTHR34265:SF1">
    <property type="entry name" value="TYPE III PANTOTHENATE KINASE"/>
    <property type="match status" value="1"/>
</dbReference>
<dbReference type="Pfam" id="PF03309">
    <property type="entry name" value="Pan_kinase"/>
    <property type="match status" value="1"/>
</dbReference>
<dbReference type="SUPFAM" id="SSF53067">
    <property type="entry name" value="Actin-like ATPase domain"/>
    <property type="match status" value="2"/>
</dbReference>
<gene>
    <name evidence="1" type="primary">coaX</name>
    <name type="ordered locus">jhp_0796</name>
</gene>
<evidence type="ECO:0000255" key="1">
    <source>
        <dbReference type="HAMAP-Rule" id="MF_01274"/>
    </source>
</evidence>
<name>COAX_HELPJ</name>
<comment type="function">
    <text evidence="1">Catalyzes the phosphorylation of pantothenate (Pan), the first step in CoA biosynthesis.</text>
</comment>
<comment type="catalytic activity">
    <reaction evidence="1">
        <text>(R)-pantothenate + ATP = (R)-4'-phosphopantothenate + ADP + H(+)</text>
        <dbReference type="Rhea" id="RHEA:16373"/>
        <dbReference type="ChEBI" id="CHEBI:10986"/>
        <dbReference type="ChEBI" id="CHEBI:15378"/>
        <dbReference type="ChEBI" id="CHEBI:29032"/>
        <dbReference type="ChEBI" id="CHEBI:30616"/>
        <dbReference type="ChEBI" id="CHEBI:456216"/>
        <dbReference type="EC" id="2.7.1.33"/>
    </reaction>
</comment>
<comment type="cofactor">
    <cofactor evidence="1">
        <name>NH4(+)</name>
        <dbReference type="ChEBI" id="CHEBI:28938"/>
    </cofactor>
    <cofactor evidence="1">
        <name>K(+)</name>
        <dbReference type="ChEBI" id="CHEBI:29103"/>
    </cofactor>
    <text evidence="1">A monovalent cation. Ammonium or potassium.</text>
</comment>
<comment type="pathway">
    <text evidence="1">Cofactor biosynthesis; coenzyme A biosynthesis; CoA from (R)-pantothenate: step 1/5.</text>
</comment>
<comment type="subunit">
    <text evidence="1">Homodimer.</text>
</comment>
<comment type="subcellular location">
    <subcellularLocation>
        <location evidence="1">Cytoplasm</location>
    </subcellularLocation>
</comment>
<comment type="similarity">
    <text evidence="1">Belongs to the type III pantothenate kinase family.</text>
</comment>
<proteinExistence type="inferred from homology"/>
<feature type="chain" id="PRO_0000267547" description="Type III pantothenate kinase">
    <location>
        <begin position="1"/>
        <end position="223"/>
    </location>
</feature>
<feature type="active site" description="Proton acceptor" evidence="1">
    <location>
        <position position="87"/>
    </location>
</feature>
<feature type="binding site" evidence="1">
    <location>
        <begin position="17"/>
        <end position="24"/>
    </location>
    <ligand>
        <name>ATP</name>
        <dbReference type="ChEBI" id="CHEBI:30616"/>
    </ligand>
</feature>
<feature type="binding site" evidence="1">
    <location>
        <position position="81"/>
    </location>
    <ligand>
        <name>substrate</name>
    </ligand>
</feature>
<feature type="binding site" evidence="1">
    <location>
        <begin position="85"/>
        <end position="88"/>
    </location>
    <ligand>
        <name>substrate</name>
    </ligand>
</feature>
<feature type="binding site" evidence="1">
    <location>
        <position position="102"/>
    </location>
    <ligand>
        <name>K(+)</name>
        <dbReference type="ChEBI" id="CHEBI:29103"/>
    </ligand>
</feature>
<feature type="binding site" evidence="1">
    <location>
        <position position="105"/>
    </location>
    <ligand>
        <name>ATP</name>
        <dbReference type="ChEBI" id="CHEBI:30616"/>
    </ligand>
</feature>
<feature type="binding site" evidence="1">
    <location>
        <position position="157"/>
    </location>
    <ligand>
        <name>substrate</name>
    </ligand>
</feature>
<keyword id="KW-0067">ATP-binding</keyword>
<keyword id="KW-0173">Coenzyme A biosynthesis</keyword>
<keyword id="KW-0963">Cytoplasm</keyword>
<keyword id="KW-0418">Kinase</keyword>
<keyword id="KW-0479">Metal-binding</keyword>
<keyword id="KW-0547">Nucleotide-binding</keyword>
<keyword id="KW-0630">Potassium</keyword>
<keyword id="KW-0808">Transferase</keyword>